<proteinExistence type="inferred from homology"/>
<protein>
    <recommendedName>
        <fullName evidence="1">GTPase Obg</fullName>
        <ecNumber evidence="1">3.6.5.-</ecNumber>
    </recommendedName>
    <alternativeName>
        <fullName evidence="1">GTP-binding protein Obg</fullName>
    </alternativeName>
</protein>
<name>OBG_ALLAM</name>
<keyword id="KW-0963">Cytoplasm</keyword>
<keyword id="KW-0342">GTP-binding</keyword>
<keyword id="KW-0378">Hydrolase</keyword>
<keyword id="KW-0460">Magnesium</keyword>
<keyword id="KW-0479">Metal-binding</keyword>
<keyword id="KW-0547">Nucleotide-binding</keyword>
<keyword id="KW-1185">Reference proteome</keyword>
<gene>
    <name evidence="1" type="primary">obg</name>
    <name type="ordered locus">Avi_4282</name>
</gene>
<accession>B9JUH9</accession>
<feature type="chain" id="PRO_0000385680" description="GTPase Obg">
    <location>
        <begin position="1"/>
        <end position="366"/>
    </location>
</feature>
<feature type="domain" description="Obg" evidence="2">
    <location>
        <begin position="1"/>
        <end position="159"/>
    </location>
</feature>
<feature type="domain" description="OBG-type G" evidence="1">
    <location>
        <begin position="160"/>
        <end position="327"/>
    </location>
</feature>
<feature type="region of interest" description="Disordered" evidence="3">
    <location>
        <begin position="333"/>
        <end position="366"/>
    </location>
</feature>
<feature type="compositionally biased region" description="Basic and acidic residues" evidence="3">
    <location>
        <begin position="347"/>
        <end position="357"/>
    </location>
</feature>
<feature type="binding site" evidence="1">
    <location>
        <begin position="166"/>
        <end position="173"/>
    </location>
    <ligand>
        <name>GTP</name>
        <dbReference type="ChEBI" id="CHEBI:37565"/>
    </ligand>
</feature>
<feature type="binding site" evidence="1">
    <location>
        <position position="173"/>
    </location>
    <ligand>
        <name>Mg(2+)</name>
        <dbReference type="ChEBI" id="CHEBI:18420"/>
    </ligand>
</feature>
<feature type="binding site" evidence="1">
    <location>
        <begin position="191"/>
        <end position="195"/>
    </location>
    <ligand>
        <name>GTP</name>
        <dbReference type="ChEBI" id="CHEBI:37565"/>
    </ligand>
</feature>
<feature type="binding site" evidence="1">
    <location>
        <position position="193"/>
    </location>
    <ligand>
        <name>Mg(2+)</name>
        <dbReference type="ChEBI" id="CHEBI:18420"/>
    </ligand>
</feature>
<feature type="binding site" evidence="1">
    <location>
        <begin position="212"/>
        <end position="215"/>
    </location>
    <ligand>
        <name>GTP</name>
        <dbReference type="ChEBI" id="CHEBI:37565"/>
    </ligand>
</feature>
<feature type="binding site" evidence="1">
    <location>
        <begin position="279"/>
        <end position="282"/>
    </location>
    <ligand>
        <name>GTP</name>
        <dbReference type="ChEBI" id="CHEBI:37565"/>
    </ligand>
</feature>
<feature type="binding site" evidence="1">
    <location>
        <begin position="308"/>
        <end position="310"/>
    </location>
    <ligand>
        <name>GTP</name>
        <dbReference type="ChEBI" id="CHEBI:37565"/>
    </ligand>
</feature>
<evidence type="ECO:0000255" key="1">
    <source>
        <dbReference type="HAMAP-Rule" id="MF_01454"/>
    </source>
</evidence>
<evidence type="ECO:0000255" key="2">
    <source>
        <dbReference type="PROSITE-ProRule" id="PRU01231"/>
    </source>
</evidence>
<evidence type="ECO:0000256" key="3">
    <source>
        <dbReference type="SAM" id="MobiDB-lite"/>
    </source>
</evidence>
<sequence>MKFLDEAKVYIRSGDGGAGAVSFRREKFIEFGGPDGGDGGRGGDVWVEAVNGLNTLIDFRFQQHFKATVGTHGMGRNRTGANGEHVTLKVPVGTQIFEEDAETLIVDMVTEGQRFRLAAGGNGGFGNAHFKSATNQAPDWANPGLEGEEKTIWLRLKLIADAGLVGLPNAGKSTFLAAVTRARPKIANYPFTTLHPNLGVATVDEREFILADIPGLIEGAHEGVGIGDRFLGHVERTRVLLHLVSAQEEDVAKAYTTVAHELEAYDGGLEDKPEIVALSQIDVLDEDELKKKLKALQKACSKKPMMISAITGKGMLEVLRALRDVIVENRSYDDETISQRPKKHRHKLEDRPQHENGPEESEEGEE</sequence>
<comment type="function">
    <text evidence="1">An essential GTPase which binds GTP, GDP and possibly (p)ppGpp with moderate affinity, with high nucleotide exchange rates and a fairly low GTP hydrolysis rate. Plays a role in control of the cell cycle, stress response, ribosome biogenesis and in those bacteria that undergo differentiation, in morphogenesis control.</text>
</comment>
<comment type="cofactor">
    <cofactor evidence="1">
        <name>Mg(2+)</name>
        <dbReference type="ChEBI" id="CHEBI:18420"/>
    </cofactor>
</comment>
<comment type="subunit">
    <text evidence="1">Monomer.</text>
</comment>
<comment type="subcellular location">
    <subcellularLocation>
        <location evidence="1">Cytoplasm</location>
    </subcellularLocation>
</comment>
<comment type="similarity">
    <text evidence="1">Belongs to the TRAFAC class OBG-HflX-like GTPase superfamily. OBG GTPase family.</text>
</comment>
<reference key="1">
    <citation type="journal article" date="2009" name="J. Bacteriol.">
        <title>Genome sequences of three Agrobacterium biovars help elucidate the evolution of multichromosome genomes in bacteria.</title>
        <authorList>
            <person name="Slater S.C."/>
            <person name="Goldman B.S."/>
            <person name="Goodner B."/>
            <person name="Setubal J.C."/>
            <person name="Farrand S.K."/>
            <person name="Nester E.W."/>
            <person name="Burr T.J."/>
            <person name="Banta L."/>
            <person name="Dickerman A.W."/>
            <person name="Paulsen I."/>
            <person name="Otten L."/>
            <person name="Suen G."/>
            <person name="Welch R."/>
            <person name="Almeida N.F."/>
            <person name="Arnold F."/>
            <person name="Burton O.T."/>
            <person name="Du Z."/>
            <person name="Ewing A."/>
            <person name="Godsy E."/>
            <person name="Heisel S."/>
            <person name="Houmiel K.L."/>
            <person name="Jhaveri J."/>
            <person name="Lu J."/>
            <person name="Miller N.M."/>
            <person name="Norton S."/>
            <person name="Chen Q."/>
            <person name="Phoolcharoen W."/>
            <person name="Ohlin V."/>
            <person name="Ondrusek D."/>
            <person name="Pride N."/>
            <person name="Stricklin S.L."/>
            <person name="Sun J."/>
            <person name="Wheeler C."/>
            <person name="Wilson L."/>
            <person name="Zhu H."/>
            <person name="Wood D.W."/>
        </authorList>
    </citation>
    <scope>NUCLEOTIDE SEQUENCE [LARGE SCALE GENOMIC DNA]</scope>
    <source>
        <strain>ATCC BAA-846 / DSM 112012 / S4</strain>
    </source>
</reference>
<organism>
    <name type="scientific">Allorhizobium ampelinum (strain ATCC BAA-846 / DSM 112012 / S4)</name>
    <name type="common">Agrobacterium vitis (strain S4)</name>
    <dbReference type="NCBI Taxonomy" id="311402"/>
    <lineage>
        <taxon>Bacteria</taxon>
        <taxon>Pseudomonadati</taxon>
        <taxon>Pseudomonadota</taxon>
        <taxon>Alphaproteobacteria</taxon>
        <taxon>Hyphomicrobiales</taxon>
        <taxon>Rhizobiaceae</taxon>
        <taxon>Rhizobium/Agrobacterium group</taxon>
        <taxon>Allorhizobium</taxon>
        <taxon>Allorhizobium ampelinum</taxon>
    </lineage>
</organism>
<dbReference type="EC" id="3.6.5.-" evidence="1"/>
<dbReference type="EMBL" id="CP000633">
    <property type="protein sequence ID" value="ACM38102.1"/>
    <property type="molecule type" value="Genomic_DNA"/>
</dbReference>
<dbReference type="SMR" id="B9JUH9"/>
<dbReference type="STRING" id="311402.Avi_4282"/>
<dbReference type="KEGG" id="avi:Avi_4282"/>
<dbReference type="eggNOG" id="COG0536">
    <property type="taxonomic scope" value="Bacteria"/>
</dbReference>
<dbReference type="HOGENOM" id="CLU_011747_2_0_5"/>
<dbReference type="Proteomes" id="UP000001596">
    <property type="component" value="Chromosome 1"/>
</dbReference>
<dbReference type="GO" id="GO:0005737">
    <property type="term" value="C:cytoplasm"/>
    <property type="evidence" value="ECO:0007669"/>
    <property type="project" value="UniProtKB-SubCell"/>
</dbReference>
<dbReference type="GO" id="GO:0005525">
    <property type="term" value="F:GTP binding"/>
    <property type="evidence" value="ECO:0007669"/>
    <property type="project" value="UniProtKB-UniRule"/>
</dbReference>
<dbReference type="GO" id="GO:0003924">
    <property type="term" value="F:GTPase activity"/>
    <property type="evidence" value="ECO:0007669"/>
    <property type="project" value="UniProtKB-UniRule"/>
</dbReference>
<dbReference type="GO" id="GO:0000287">
    <property type="term" value="F:magnesium ion binding"/>
    <property type="evidence" value="ECO:0007669"/>
    <property type="project" value="InterPro"/>
</dbReference>
<dbReference type="GO" id="GO:0042254">
    <property type="term" value="P:ribosome biogenesis"/>
    <property type="evidence" value="ECO:0007669"/>
    <property type="project" value="UniProtKB-UniRule"/>
</dbReference>
<dbReference type="CDD" id="cd01898">
    <property type="entry name" value="Obg"/>
    <property type="match status" value="1"/>
</dbReference>
<dbReference type="FunFam" id="2.70.210.12:FF:000001">
    <property type="entry name" value="GTPase Obg"/>
    <property type="match status" value="1"/>
</dbReference>
<dbReference type="Gene3D" id="2.70.210.12">
    <property type="entry name" value="GTP1/OBG domain"/>
    <property type="match status" value="1"/>
</dbReference>
<dbReference type="Gene3D" id="3.40.50.300">
    <property type="entry name" value="P-loop containing nucleotide triphosphate hydrolases"/>
    <property type="match status" value="1"/>
</dbReference>
<dbReference type="HAMAP" id="MF_01454">
    <property type="entry name" value="GTPase_Obg"/>
    <property type="match status" value="1"/>
</dbReference>
<dbReference type="InterPro" id="IPR031167">
    <property type="entry name" value="G_OBG"/>
</dbReference>
<dbReference type="InterPro" id="IPR006073">
    <property type="entry name" value="GTP-bd"/>
</dbReference>
<dbReference type="InterPro" id="IPR014100">
    <property type="entry name" value="GTP-bd_Obg/CgtA"/>
</dbReference>
<dbReference type="InterPro" id="IPR006074">
    <property type="entry name" value="GTP1-OBG_CS"/>
</dbReference>
<dbReference type="InterPro" id="IPR006169">
    <property type="entry name" value="GTP1_OBG_dom"/>
</dbReference>
<dbReference type="InterPro" id="IPR036726">
    <property type="entry name" value="GTP1_OBG_dom_sf"/>
</dbReference>
<dbReference type="InterPro" id="IPR045086">
    <property type="entry name" value="OBG_GTPase"/>
</dbReference>
<dbReference type="InterPro" id="IPR027417">
    <property type="entry name" value="P-loop_NTPase"/>
</dbReference>
<dbReference type="NCBIfam" id="TIGR02729">
    <property type="entry name" value="Obg_CgtA"/>
    <property type="match status" value="1"/>
</dbReference>
<dbReference type="NCBIfam" id="NF008955">
    <property type="entry name" value="PRK12297.1"/>
    <property type="match status" value="1"/>
</dbReference>
<dbReference type="NCBIfam" id="NF008956">
    <property type="entry name" value="PRK12299.1"/>
    <property type="match status" value="1"/>
</dbReference>
<dbReference type="PANTHER" id="PTHR11702">
    <property type="entry name" value="DEVELOPMENTALLY REGULATED GTP-BINDING PROTEIN-RELATED"/>
    <property type="match status" value="1"/>
</dbReference>
<dbReference type="PANTHER" id="PTHR11702:SF31">
    <property type="entry name" value="MITOCHONDRIAL RIBOSOME-ASSOCIATED GTPASE 2"/>
    <property type="match status" value="1"/>
</dbReference>
<dbReference type="Pfam" id="PF01018">
    <property type="entry name" value="GTP1_OBG"/>
    <property type="match status" value="1"/>
</dbReference>
<dbReference type="Pfam" id="PF01926">
    <property type="entry name" value="MMR_HSR1"/>
    <property type="match status" value="1"/>
</dbReference>
<dbReference type="PIRSF" id="PIRSF002401">
    <property type="entry name" value="GTP_bd_Obg/CgtA"/>
    <property type="match status" value="1"/>
</dbReference>
<dbReference type="PRINTS" id="PR00326">
    <property type="entry name" value="GTP1OBG"/>
</dbReference>
<dbReference type="SUPFAM" id="SSF82051">
    <property type="entry name" value="Obg GTP-binding protein N-terminal domain"/>
    <property type="match status" value="1"/>
</dbReference>
<dbReference type="SUPFAM" id="SSF52540">
    <property type="entry name" value="P-loop containing nucleoside triphosphate hydrolases"/>
    <property type="match status" value="1"/>
</dbReference>
<dbReference type="PROSITE" id="PS51710">
    <property type="entry name" value="G_OBG"/>
    <property type="match status" value="1"/>
</dbReference>
<dbReference type="PROSITE" id="PS00905">
    <property type="entry name" value="GTP1_OBG"/>
    <property type="match status" value="1"/>
</dbReference>
<dbReference type="PROSITE" id="PS51883">
    <property type="entry name" value="OBG"/>
    <property type="match status" value="1"/>
</dbReference>